<sequence length="97" mass="11240">MDITDIRIKKVESKNSGSKLLAYVAVTFDNCLVLHNIRVIKGQKGVFIAMPNRRTRVGEYKDIVHPISQDFRKTLQTSIFKEYIRENPADLELELDF</sequence>
<accession>Q65ZY9</accession>
<gene>
    <name evidence="1" type="primary">spoVG</name>
    <name type="ordered locus">BG0809</name>
</gene>
<feature type="chain" id="PRO_0000157192" description="Putative septation protein SpoVG">
    <location>
        <begin position="1"/>
        <end position="97"/>
    </location>
</feature>
<evidence type="ECO:0000255" key="1">
    <source>
        <dbReference type="HAMAP-Rule" id="MF_00819"/>
    </source>
</evidence>
<dbReference type="EMBL" id="CP000013">
    <property type="protein sequence ID" value="AAU07632.1"/>
    <property type="molecule type" value="Genomic_DNA"/>
</dbReference>
<dbReference type="RefSeq" id="WP_004791087.1">
    <property type="nucleotide sequence ID" value="NZ_CP028872.1"/>
</dbReference>
<dbReference type="SMR" id="Q65ZY9"/>
<dbReference type="GeneID" id="83866267"/>
<dbReference type="KEGG" id="bga:BG0809"/>
<dbReference type="eggNOG" id="COG2088">
    <property type="taxonomic scope" value="Bacteria"/>
</dbReference>
<dbReference type="HOGENOM" id="CLU_103669_2_1_12"/>
<dbReference type="OrthoDB" id="9796286at2"/>
<dbReference type="Proteomes" id="UP000002276">
    <property type="component" value="Chromosome"/>
</dbReference>
<dbReference type="GO" id="GO:0000917">
    <property type="term" value="P:division septum assembly"/>
    <property type="evidence" value="ECO:0007669"/>
    <property type="project" value="UniProtKB-KW"/>
</dbReference>
<dbReference type="GO" id="GO:0030435">
    <property type="term" value="P:sporulation resulting in formation of a cellular spore"/>
    <property type="evidence" value="ECO:0007669"/>
    <property type="project" value="InterPro"/>
</dbReference>
<dbReference type="Gene3D" id="3.30.1120.40">
    <property type="entry name" value="Stage V sporulation protein G"/>
    <property type="match status" value="1"/>
</dbReference>
<dbReference type="HAMAP" id="MF_00819">
    <property type="entry name" value="SpoVG"/>
    <property type="match status" value="1"/>
</dbReference>
<dbReference type="InterPro" id="IPR007170">
    <property type="entry name" value="SpoVG"/>
</dbReference>
<dbReference type="InterPro" id="IPR036751">
    <property type="entry name" value="SpoVG_sf"/>
</dbReference>
<dbReference type="NCBIfam" id="NF009749">
    <property type="entry name" value="PRK13259.1"/>
    <property type="match status" value="1"/>
</dbReference>
<dbReference type="PANTHER" id="PTHR38429">
    <property type="entry name" value="SEPTATION PROTEIN SPOVG-RELATED"/>
    <property type="match status" value="1"/>
</dbReference>
<dbReference type="PANTHER" id="PTHR38429:SF1">
    <property type="entry name" value="SEPTATION PROTEIN SPOVG-RELATED"/>
    <property type="match status" value="1"/>
</dbReference>
<dbReference type="Pfam" id="PF04026">
    <property type="entry name" value="SpoVG"/>
    <property type="match status" value="1"/>
</dbReference>
<dbReference type="SUPFAM" id="SSF160537">
    <property type="entry name" value="SpoVG-like"/>
    <property type="match status" value="1"/>
</dbReference>
<keyword id="KW-0131">Cell cycle</keyword>
<keyword id="KW-0132">Cell division</keyword>
<keyword id="KW-0717">Septation</keyword>
<name>SP5G_BORGP</name>
<organism>
    <name type="scientific">Borrelia garinii subsp. bavariensis (strain ATCC BAA-2496 / DSM 23469 / PBi)</name>
    <name type="common">Borreliella bavariensis</name>
    <dbReference type="NCBI Taxonomy" id="290434"/>
    <lineage>
        <taxon>Bacteria</taxon>
        <taxon>Pseudomonadati</taxon>
        <taxon>Spirochaetota</taxon>
        <taxon>Spirochaetia</taxon>
        <taxon>Spirochaetales</taxon>
        <taxon>Borreliaceae</taxon>
        <taxon>Borreliella</taxon>
    </lineage>
</organism>
<reference key="1">
    <citation type="journal article" date="2004" name="Nucleic Acids Res.">
        <title>Comparative analysis of the Borrelia garinii genome.</title>
        <authorList>
            <person name="Gloeckner G."/>
            <person name="Lehmann R."/>
            <person name="Romualdi A."/>
            <person name="Pradella S."/>
            <person name="Schulte-Spechtel U."/>
            <person name="Schilhabel M."/>
            <person name="Wilske B."/>
            <person name="Suehnel J."/>
            <person name="Platzer M."/>
        </authorList>
    </citation>
    <scope>NUCLEOTIDE SEQUENCE [LARGE SCALE GENOMIC DNA]</scope>
    <source>
        <strain>ATCC BAA-2496 / DSM 23469 / PBi</strain>
    </source>
</reference>
<protein>
    <recommendedName>
        <fullName evidence="1">Putative septation protein SpoVG</fullName>
    </recommendedName>
</protein>
<proteinExistence type="inferred from homology"/>
<comment type="function">
    <text evidence="1">Could be involved in septation.</text>
</comment>
<comment type="similarity">
    <text evidence="1">Belongs to the SpoVG family.</text>
</comment>